<evidence type="ECO:0000256" key="1">
    <source>
        <dbReference type="SAM" id="MobiDB-lite"/>
    </source>
</evidence>
<comment type="subcellular location">
    <subcellularLocation>
        <location>Plastid</location>
        <location>Chloroplast</location>
    </subcellularLocation>
</comment>
<reference key="1">
    <citation type="journal article" date="1997" name="Proc. Natl. Acad. Sci. U.S.A.">
        <title>Complete nucleotide sequence of the chloroplast genome from the green alga Chlorella vulgaris: the existence of genes possibly involved in chloroplast division.</title>
        <authorList>
            <person name="Wakasugi T."/>
            <person name="Nagai T."/>
            <person name="Kapoor M."/>
            <person name="Sugita M."/>
            <person name="Ito M."/>
            <person name="Ito S."/>
            <person name="Tsudzuki J."/>
            <person name="Nakashima K."/>
            <person name="Tsudzuki T."/>
            <person name="Suzuki Y."/>
            <person name="Hamada A."/>
            <person name="Ohta T."/>
            <person name="Inamura A."/>
            <person name="Yoshinaga K."/>
            <person name="Sugiura M."/>
        </authorList>
    </citation>
    <scope>NUCLEOTIDE SEQUENCE [LARGE SCALE GENOMIC DNA]</scope>
    <source>
        <strain>IAM C-27 / Tamiya</strain>
    </source>
</reference>
<geneLocation type="chloroplast"/>
<accession>O20130</accession>
<feature type="chain" id="PRO_0000217511" description="Uncharacterized 28.3 kDa protein in rrn23-psbC intergenic region">
    <location>
        <begin position="1"/>
        <end position="250"/>
    </location>
</feature>
<feature type="region of interest" description="Disordered" evidence="1">
    <location>
        <begin position="207"/>
        <end position="250"/>
    </location>
</feature>
<feature type="compositionally biased region" description="Basic and acidic residues" evidence="1">
    <location>
        <begin position="207"/>
        <end position="226"/>
    </location>
</feature>
<feature type="compositionally biased region" description="Low complexity" evidence="1">
    <location>
        <begin position="233"/>
        <end position="250"/>
    </location>
</feature>
<dbReference type="EMBL" id="AB001684">
    <property type="protein sequence ID" value="BAA57870.1"/>
    <property type="molecule type" value="Genomic_DNA"/>
</dbReference>
<dbReference type="PIR" id="T07223">
    <property type="entry name" value="T07223"/>
</dbReference>
<dbReference type="RefSeq" id="NP_045795.1">
    <property type="nucleotide sequence ID" value="NC_001865.1"/>
</dbReference>
<dbReference type="SMR" id="O20130"/>
<dbReference type="GeneID" id="1457409"/>
<dbReference type="GO" id="GO:0009507">
    <property type="term" value="C:chloroplast"/>
    <property type="evidence" value="ECO:0007669"/>
    <property type="project" value="UniProtKB-SubCell"/>
</dbReference>
<proteinExistence type="predicted"/>
<organism>
    <name type="scientific">Chlorella vulgaris</name>
    <name type="common">Green alga</name>
    <dbReference type="NCBI Taxonomy" id="3077"/>
    <lineage>
        <taxon>Eukaryota</taxon>
        <taxon>Viridiplantae</taxon>
        <taxon>Chlorophyta</taxon>
        <taxon>core chlorophytes</taxon>
        <taxon>Trebouxiophyceae</taxon>
        <taxon>Chlorellales</taxon>
        <taxon>Chlorellaceae</taxon>
        <taxon>Chlorella clade</taxon>
        <taxon>Chlorella</taxon>
    </lineage>
</organism>
<name>YCX3_CHLVU</name>
<keyword id="KW-0150">Chloroplast</keyword>
<keyword id="KW-0934">Plastid</keyword>
<protein>
    <recommendedName>
        <fullName>Uncharacterized 28.3 kDa protein in rrn23-psbC intergenic region</fullName>
    </recommendedName>
    <alternativeName>
        <fullName>ORF250</fullName>
    </alternativeName>
</protein>
<sequence length="250" mass="28261">MKKEFLHFLAFLITFVFCVKTQQVVKILRSRTMIDFGLEFQKAQIEMHNNPEDRVRFVDAVNLCLPASDTFFQNPDRENKFSENYSIKLIDTTPHVSEIVLQTFVKEILSLSNINTEDTLGKETLGKETYRLSNLLKKSKFGMESHHRIQNNSEGPNTFENGLGISTPKHGIAHFADAIQRFLDHKGNSSSNTRAAGARVEAIREALNDRDAINKSEEARKAREEVFIPSEPSKPSIASKRSSASKSTKS</sequence>